<proteinExistence type="inferred from homology"/>
<protein>
    <recommendedName>
        <fullName evidence="1">Glutamate--tRNA ligase</fullName>
        <ecNumber evidence="1">6.1.1.17</ecNumber>
    </recommendedName>
    <alternativeName>
        <fullName evidence="1">Glutamyl-tRNA synthetase</fullName>
        <shortName evidence="1">GluRS</shortName>
    </alternativeName>
</protein>
<reference key="1">
    <citation type="journal article" date="2008" name="BMC Genomics">
        <title>The missing link: Bordetella petrii is endowed with both the metabolic versatility of environmental bacteria and virulence traits of pathogenic Bordetellae.</title>
        <authorList>
            <person name="Gross R."/>
            <person name="Guzman C.A."/>
            <person name="Sebaihia M."/>
            <person name="Martin dos Santos V.A.P."/>
            <person name="Pieper D.H."/>
            <person name="Koebnik R."/>
            <person name="Lechner M."/>
            <person name="Bartels D."/>
            <person name="Buhrmester J."/>
            <person name="Choudhuri J.V."/>
            <person name="Ebensen T."/>
            <person name="Gaigalat L."/>
            <person name="Herrmann S."/>
            <person name="Khachane A.N."/>
            <person name="Larisch C."/>
            <person name="Link S."/>
            <person name="Linke B."/>
            <person name="Meyer F."/>
            <person name="Mormann S."/>
            <person name="Nakunst D."/>
            <person name="Rueckert C."/>
            <person name="Schneiker-Bekel S."/>
            <person name="Schulze K."/>
            <person name="Voerholter F.-J."/>
            <person name="Yevsa T."/>
            <person name="Engle J.T."/>
            <person name="Goldman W.E."/>
            <person name="Puehler A."/>
            <person name="Goebel U.B."/>
            <person name="Goesmann A."/>
            <person name="Bloecker H."/>
            <person name="Kaiser O."/>
            <person name="Martinez-Arias R."/>
        </authorList>
    </citation>
    <scope>NUCLEOTIDE SEQUENCE [LARGE SCALE GENOMIC DNA]</scope>
    <source>
        <strain>ATCC BAA-461 / DSM 12804 / CCUG 43448</strain>
    </source>
</reference>
<evidence type="ECO:0000255" key="1">
    <source>
        <dbReference type="HAMAP-Rule" id="MF_00022"/>
    </source>
</evidence>
<evidence type="ECO:0000256" key="2">
    <source>
        <dbReference type="SAM" id="MobiDB-lite"/>
    </source>
</evidence>
<name>SYE_BORPD</name>
<sequence>MTSTPATIRTRFAPSPTGFLHLGGARTALFSWAFARHHQGVFVLRIEDTDLERSTPEAVQAILDSMDWLGMQPDEGPFYQMQRMDRYREVIAQMLQAGTAYHCYSSPEEVEAMREAARARGLKPRYDGTWRPEPGKTLPPVPAGRKPVVRFKNPQDGATGWNDMVKGPISFDNTELDDLIIARPDGTPTYNFCVVVDDWDMGITHVLRGDDHVNNTPRQINILRALGATLPEYGHVPMILGPDGEKLSKRHGAVNVMEYDAQGYLPEAMVNYLARLGWSHGDDELFTREQLVQWFDTRHLSKSASQWDPKKLNWVNAHYIKQMDNAELAARVAPRIERRGGNPAAVDLAAAMGLLKDRAETLEQLAESALLFCKPYQPAPAELAEQHLTPAAREALADFAQRAQGADWTREAIAALIKAVLADRGLKMPQLAIPLRVAVVGQTQTPAVDAVLALVGKDAVLQRLAAL</sequence>
<feature type="chain" id="PRO_0000367618" description="Glutamate--tRNA ligase">
    <location>
        <begin position="1"/>
        <end position="467"/>
    </location>
</feature>
<feature type="region of interest" description="Disordered" evidence="2">
    <location>
        <begin position="124"/>
        <end position="156"/>
    </location>
</feature>
<feature type="short sequence motif" description="'HIGH' region" evidence="1">
    <location>
        <begin position="14"/>
        <end position="24"/>
    </location>
</feature>
<feature type="short sequence motif" description="'KMSKS' region" evidence="1">
    <location>
        <begin position="246"/>
        <end position="250"/>
    </location>
</feature>
<feature type="compositionally biased region" description="Basic and acidic residues" evidence="2">
    <location>
        <begin position="124"/>
        <end position="134"/>
    </location>
</feature>
<feature type="binding site" evidence="1">
    <location>
        <position position="249"/>
    </location>
    <ligand>
        <name>ATP</name>
        <dbReference type="ChEBI" id="CHEBI:30616"/>
    </ligand>
</feature>
<dbReference type="EC" id="6.1.1.17" evidence="1"/>
<dbReference type="EMBL" id="AM902716">
    <property type="protein sequence ID" value="CAP40920.1"/>
    <property type="molecule type" value="Genomic_DNA"/>
</dbReference>
<dbReference type="SMR" id="A9I219"/>
<dbReference type="STRING" id="94624.Bpet0588"/>
<dbReference type="KEGG" id="bpt:Bpet0588"/>
<dbReference type="eggNOG" id="COG0008">
    <property type="taxonomic scope" value="Bacteria"/>
</dbReference>
<dbReference type="Proteomes" id="UP000001225">
    <property type="component" value="Chromosome"/>
</dbReference>
<dbReference type="GO" id="GO:0005829">
    <property type="term" value="C:cytosol"/>
    <property type="evidence" value="ECO:0007669"/>
    <property type="project" value="TreeGrafter"/>
</dbReference>
<dbReference type="GO" id="GO:0005524">
    <property type="term" value="F:ATP binding"/>
    <property type="evidence" value="ECO:0007669"/>
    <property type="project" value="UniProtKB-UniRule"/>
</dbReference>
<dbReference type="GO" id="GO:0004818">
    <property type="term" value="F:glutamate-tRNA ligase activity"/>
    <property type="evidence" value="ECO:0007669"/>
    <property type="project" value="UniProtKB-UniRule"/>
</dbReference>
<dbReference type="GO" id="GO:0000049">
    <property type="term" value="F:tRNA binding"/>
    <property type="evidence" value="ECO:0007669"/>
    <property type="project" value="InterPro"/>
</dbReference>
<dbReference type="GO" id="GO:0008270">
    <property type="term" value="F:zinc ion binding"/>
    <property type="evidence" value="ECO:0007669"/>
    <property type="project" value="InterPro"/>
</dbReference>
<dbReference type="GO" id="GO:0006424">
    <property type="term" value="P:glutamyl-tRNA aminoacylation"/>
    <property type="evidence" value="ECO:0007669"/>
    <property type="project" value="UniProtKB-UniRule"/>
</dbReference>
<dbReference type="CDD" id="cd00808">
    <property type="entry name" value="GluRS_core"/>
    <property type="match status" value="1"/>
</dbReference>
<dbReference type="FunFam" id="3.40.50.620:FF:000007">
    <property type="entry name" value="Glutamate--tRNA ligase"/>
    <property type="match status" value="1"/>
</dbReference>
<dbReference type="Gene3D" id="1.10.10.350">
    <property type="match status" value="1"/>
</dbReference>
<dbReference type="Gene3D" id="3.40.50.620">
    <property type="entry name" value="HUPs"/>
    <property type="match status" value="1"/>
</dbReference>
<dbReference type="HAMAP" id="MF_00022">
    <property type="entry name" value="Glu_tRNA_synth_type1"/>
    <property type="match status" value="1"/>
</dbReference>
<dbReference type="InterPro" id="IPR045462">
    <property type="entry name" value="aa-tRNA-synth_I_cd-bd"/>
</dbReference>
<dbReference type="InterPro" id="IPR020751">
    <property type="entry name" value="aa-tRNA-synth_I_codon-bd_sub2"/>
</dbReference>
<dbReference type="InterPro" id="IPR001412">
    <property type="entry name" value="aa-tRNA-synth_I_CS"/>
</dbReference>
<dbReference type="InterPro" id="IPR008925">
    <property type="entry name" value="aa_tRNA-synth_I_cd-bd_sf"/>
</dbReference>
<dbReference type="InterPro" id="IPR004527">
    <property type="entry name" value="Glu-tRNA-ligase_bac/mito"/>
</dbReference>
<dbReference type="InterPro" id="IPR000924">
    <property type="entry name" value="Glu/Gln-tRNA-synth"/>
</dbReference>
<dbReference type="InterPro" id="IPR020058">
    <property type="entry name" value="Glu/Gln-tRNA-synth_Ib_cat-dom"/>
</dbReference>
<dbReference type="InterPro" id="IPR049940">
    <property type="entry name" value="GluQ/Sye"/>
</dbReference>
<dbReference type="InterPro" id="IPR033910">
    <property type="entry name" value="GluRS_core"/>
</dbReference>
<dbReference type="InterPro" id="IPR014729">
    <property type="entry name" value="Rossmann-like_a/b/a_fold"/>
</dbReference>
<dbReference type="NCBIfam" id="TIGR00464">
    <property type="entry name" value="gltX_bact"/>
    <property type="match status" value="1"/>
</dbReference>
<dbReference type="PANTHER" id="PTHR43311">
    <property type="entry name" value="GLUTAMATE--TRNA LIGASE"/>
    <property type="match status" value="1"/>
</dbReference>
<dbReference type="PANTHER" id="PTHR43311:SF2">
    <property type="entry name" value="GLUTAMATE--TRNA LIGASE, MITOCHONDRIAL-RELATED"/>
    <property type="match status" value="1"/>
</dbReference>
<dbReference type="Pfam" id="PF19269">
    <property type="entry name" value="Anticodon_2"/>
    <property type="match status" value="1"/>
</dbReference>
<dbReference type="Pfam" id="PF00749">
    <property type="entry name" value="tRNA-synt_1c"/>
    <property type="match status" value="1"/>
</dbReference>
<dbReference type="PRINTS" id="PR00987">
    <property type="entry name" value="TRNASYNTHGLU"/>
</dbReference>
<dbReference type="SUPFAM" id="SSF48163">
    <property type="entry name" value="An anticodon-binding domain of class I aminoacyl-tRNA synthetases"/>
    <property type="match status" value="1"/>
</dbReference>
<dbReference type="SUPFAM" id="SSF52374">
    <property type="entry name" value="Nucleotidylyl transferase"/>
    <property type="match status" value="1"/>
</dbReference>
<dbReference type="PROSITE" id="PS00178">
    <property type="entry name" value="AA_TRNA_LIGASE_I"/>
    <property type="match status" value="1"/>
</dbReference>
<keyword id="KW-0030">Aminoacyl-tRNA synthetase</keyword>
<keyword id="KW-0067">ATP-binding</keyword>
<keyword id="KW-0963">Cytoplasm</keyword>
<keyword id="KW-0436">Ligase</keyword>
<keyword id="KW-0547">Nucleotide-binding</keyword>
<keyword id="KW-0648">Protein biosynthesis</keyword>
<comment type="function">
    <text evidence="1">Catalyzes the attachment of glutamate to tRNA(Glu) in a two-step reaction: glutamate is first activated by ATP to form Glu-AMP and then transferred to the acceptor end of tRNA(Glu).</text>
</comment>
<comment type="catalytic activity">
    <reaction evidence="1">
        <text>tRNA(Glu) + L-glutamate + ATP = L-glutamyl-tRNA(Glu) + AMP + diphosphate</text>
        <dbReference type="Rhea" id="RHEA:23540"/>
        <dbReference type="Rhea" id="RHEA-COMP:9663"/>
        <dbReference type="Rhea" id="RHEA-COMP:9680"/>
        <dbReference type="ChEBI" id="CHEBI:29985"/>
        <dbReference type="ChEBI" id="CHEBI:30616"/>
        <dbReference type="ChEBI" id="CHEBI:33019"/>
        <dbReference type="ChEBI" id="CHEBI:78442"/>
        <dbReference type="ChEBI" id="CHEBI:78520"/>
        <dbReference type="ChEBI" id="CHEBI:456215"/>
        <dbReference type="EC" id="6.1.1.17"/>
    </reaction>
</comment>
<comment type="subunit">
    <text evidence="1">Monomer.</text>
</comment>
<comment type="subcellular location">
    <subcellularLocation>
        <location evidence="1">Cytoplasm</location>
    </subcellularLocation>
</comment>
<comment type="similarity">
    <text evidence="1">Belongs to the class-I aminoacyl-tRNA synthetase family. Glutamate--tRNA ligase type 1 subfamily.</text>
</comment>
<accession>A9I219</accession>
<gene>
    <name evidence="1" type="primary">gltX</name>
    <name type="ordered locus">Bpet0588</name>
</gene>
<organism>
    <name type="scientific">Bordetella petrii (strain ATCC BAA-461 / DSM 12804 / CCUG 43448)</name>
    <dbReference type="NCBI Taxonomy" id="340100"/>
    <lineage>
        <taxon>Bacteria</taxon>
        <taxon>Pseudomonadati</taxon>
        <taxon>Pseudomonadota</taxon>
        <taxon>Betaproteobacteria</taxon>
        <taxon>Burkholderiales</taxon>
        <taxon>Alcaligenaceae</taxon>
        <taxon>Bordetella</taxon>
    </lineage>
</organism>